<protein>
    <recommendedName>
        <fullName>Porin MspD</fullName>
    </recommendedName>
</protein>
<name>MSPD_MYCS2</name>
<evidence type="ECO:0000250" key="1"/>
<evidence type="ECO:0000255" key="2"/>
<evidence type="ECO:0000269" key="3">
    <source>
    </source>
</evidence>
<evidence type="ECO:0000305" key="4"/>
<reference key="1">
    <citation type="journal article" date="2001" name="Mol. Microbiol.">
        <title>MspA provides the main hydrophilic pathway through the cell wall of Mycobacterium smegmatis.</title>
        <authorList>
            <person name="Stahl C."/>
            <person name="Kubetzko S."/>
            <person name="Kaps I."/>
            <person name="Seeber S."/>
            <person name="Engelhardt H."/>
            <person name="Niederweis M."/>
        </authorList>
    </citation>
    <scope>NUCLEOTIDE SEQUENCE [GENOMIC DNA]</scope>
    <source>
        <strain>ATCC 700084 / mc(2)155</strain>
    </source>
</reference>
<reference key="2">
    <citation type="submission" date="2006-10" db="EMBL/GenBank/DDBJ databases">
        <authorList>
            <person name="Fleischmann R.D."/>
            <person name="Dodson R.J."/>
            <person name="Haft D.H."/>
            <person name="Merkel J.S."/>
            <person name="Nelson W.C."/>
            <person name="Fraser C.M."/>
        </authorList>
    </citation>
    <scope>NUCLEOTIDE SEQUENCE [LARGE SCALE GENOMIC DNA]</scope>
    <source>
        <strain>ATCC 700084 / mc(2)155</strain>
    </source>
</reference>
<reference key="3">
    <citation type="journal article" date="2007" name="Genome Biol.">
        <title>Interrupted coding sequences in Mycobacterium smegmatis: authentic mutations or sequencing errors?</title>
        <authorList>
            <person name="Deshayes C."/>
            <person name="Perrodou E."/>
            <person name="Gallien S."/>
            <person name="Euphrasie D."/>
            <person name="Schaeffer C."/>
            <person name="Van-Dorsselaer A."/>
            <person name="Poch O."/>
            <person name="Lecompte O."/>
            <person name="Reyrat J.-M."/>
        </authorList>
    </citation>
    <scope>NUCLEOTIDE SEQUENCE [LARGE SCALE GENOMIC DNA]</scope>
    <source>
        <strain>ATCC 700084 / mc(2)155</strain>
    </source>
</reference>
<reference key="4">
    <citation type="journal article" date="2009" name="Genome Res.">
        <title>Ortho-proteogenomics: multiple proteomes investigation through orthology and a new MS-based protocol.</title>
        <authorList>
            <person name="Gallien S."/>
            <person name="Perrodou E."/>
            <person name="Carapito C."/>
            <person name="Deshayes C."/>
            <person name="Reyrat J.-M."/>
            <person name="Van Dorsselaer A."/>
            <person name="Poch O."/>
            <person name="Schaeffer C."/>
            <person name="Lecompte O."/>
        </authorList>
    </citation>
    <scope>NUCLEOTIDE SEQUENCE [LARGE SCALE GENOMIC DNA]</scope>
    <source>
        <strain>ATCC 700084 / mc(2)155</strain>
    </source>
</reference>
<reference key="5">
    <citation type="journal article" date="2005" name="Mol. Microbiol.">
        <title>The growth rate of Mycobacterium smegmatis depends on sufficient porin-mediated influx of nutrients.</title>
        <authorList>
            <person name="Stephan J."/>
            <person name="Bender J."/>
            <person name="Wolschendorf F."/>
            <person name="Hoffmann C."/>
            <person name="Roth E."/>
            <person name="Mailander C."/>
            <person name="Engelhardt H."/>
            <person name="Niederweis M."/>
        </authorList>
    </citation>
    <scope>FUNCTION AS A PORIN</scope>
    <scope>INDUCTION</scope>
    <scope>DISRUPTION PHENOTYPE</scope>
    <source>
        <strain>ATCC 700084 / mc(2)155</strain>
    </source>
</reference>
<proteinExistence type="evidence at protein level"/>
<feature type="signal peptide" evidence="2">
    <location>
        <begin position="1"/>
        <end position="24"/>
    </location>
</feature>
<feature type="chain" id="PRO_5000066832" description="Porin MspD">
    <location>
        <begin position="25"/>
        <end position="207"/>
    </location>
</feature>
<comment type="function">
    <text evidence="3">A backup porin induced when MspA, the major porin, is deleted. It probably forms a water-filled channel which favors the permeation of cations. There are about 2400 porins in wild-type, 800 in an mspA deletion and 150 in a double mspA-mspC deletion.</text>
</comment>
<comment type="subunit">
    <text evidence="1">Octamers. Probably forms a goblet with the wide end on the exterior of the outer membrane and a central channel. It is not known if mixed oligomers of MspD with other Msp subunits form in vivo (By similarity).</text>
</comment>
<comment type="subcellular location">
    <subcellularLocation>
        <location evidence="1">Cell outer membrane</location>
    </subcellularLocation>
    <subcellularLocation>
        <location evidence="1">Secreted</location>
        <location evidence="1">Cell wall</location>
    </subcellularLocation>
</comment>
<comment type="induction">
    <text evidence="3">Not expressed in wild-type cells, it is induced in an mspA deletion mutant.</text>
</comment>
<comment type="disruption phenotype">
    <text evidence="3">Single deletion is viable. A triple mspA-mspC-mspD deletion grows slower than the single mspA or double mspA-mspC deletions and has reduced Fe(3+) transport compared to wild-type.</text>
</comment>
<comment type="similarity">
    <text evidence="4">Belongs to the mycobacterial porin (TC 1.B.24) family.</text>
</comment>
<keyword id="KW-0998">Cell outer membrane</keyword>
<keyword id="KW-0134">Cell wall</keyword>
<keyword id="KW-0406">Ion transport</keyword>
<keyword id="KW-0472">Membrane</keyword>
<keyword id="KW-0626">Porin</keyword>
<keyword id="KW-1185">Reference proteome</keyword>
<keyword id="KW-0964">Secreted</keyword>
<keyword id="KW-0732">Signal</keyword>
<keyword id="KW-0812">Transmembrane</keyword>
<keyword id="KW-1134">Transmembrane beta strand</keyword>
<keyword id="KW-0813">Transport</keyword>
<dbReference type="EMBL" id="AJ300774">
    <property type="protein sequence ID" value="CAC83628.1"/>
    <property type="molecule type" value="Genomic_DNA"/>
</dbReference>
<dbReference type="EMBL" id="CP000480">
    <property type="protein sequence ID" value="ABK72453.1"/>
    <property type="molecule type" value="Genomic_DNA"/>
</dbReference>
<dbReference type="EMBL" id="CP001663">
    <property type="protein sequence ID" value="AFP42330.1"/>
    <property type="molecule type" value="Genomic_DNA"/>
</dbReference>
<dbReference type="RefSeq" id="YP_890279.1">
    <property type="nucleotide sequence ID" value="NC_008596.1"/>
</dbReference>
<dbReference type="SMR" id="A0R541"/>
<dbReference type="STRING" id="246196.MSMEG_6057"/>
<dbReference type="PaxDb" id="246196-MSMEI_5897"/>
<dbReference type="KEGG" id="msg:MSMEI_5897"/>
<dbReference type="KEGG" id="msm:MSMEG_6057"/>
<dbReference type="PATRIC" id="fig|246196.19.peg.5895"/>
<dbReference type="eggNOG" id="ENOG5031B57">
    <property type="taxonomic scope" value="Bacteria"/>
</dbReference>
<dbReference type="OrthoDB" id="4569497at2"/>
<dbReference type="Proteomes" id="UP000000757">
    <property type="component" value="Chromosome"/>
</dbReference>
<dbReference type="Proteomes" id="UP000006158">
    <property type="component" value="Chromosome"/>
</dbReference>
<dbReference type="GO" id="GO:0009279">
    <property type="term" value="C:cell outer membrane"/>
    <property type="evidence" value="ECO:0007669"/>
    <property type="project" value="UniProtKB-SubCell"/>
</dbReference>
<dbReference type="GO" id="GO:0005576">
    <property type="term" value="C:extracellular region"/>
    <property type="evidence" value="ECO:0007669"/>
    <property type="project" value="UniProtKB-KW"/>
</dbReference>
<dbReference type="GO" id="GO:0046930">
    <property type="term" value="C:pore complex"/>
    <property type="evidence" value="ECO:0007669"/>
    <property type="project" value="UniProtKB-KW"/>
</dbReference>
<dbReference type="GO" id="GO:0015288">
    <property type="term" value="F:porin activity"/>
    <property type="evidence" value="ECO:0007669"/>
    <property type="project" value="UniProtKB-KW"/>
</dbReference>
<dbReference type="GO" id="GO:0006811">
    <property type="term" value="P:monoatomic ion transport"/>
    <property type="evidence" value="ECO:0007669"/>
    <property type="project" value="UniProtKB-KW"/>
</dbReference>
<dbReference type="Gene3D" id="2.60.40.1650">
    <property type="entry name" value="Porin MspA (Ig-like beta-sandwich domain)"/>
    <property type="match status" value="1"/>
</dbReference>
<dbReference type="Gene3D" id="2.10.300.10">
    <property type="entry name" value="Porin MspA ribbon domain"/>
    <property type="match status" value="1"/>
</dbReference>
<dbReference type="InterPro" id="IPR036435">
    <property type="entry name" value="Leukocidin/porin_MspA_sf"/>
</dbReference>
<dbReference type="InterPro" id="IPR015286">
    <property type="entry name" value="Porin_fam_mycobact-type"/>
</dbReference>
<dbReference type="Pfam" id="PF09203">
    <property type="entry name" value="MspA"/>
    <property type="match status" value="1"/>
</dbReference>
<dbReference type="SUPFAM" id="SSF56959">
    <property type="entry name" value="Leukocidin-like"/>
    <property type="match status" value="1"/>
</dbReference>
<gene>
    <name type="primary">mspD</name>
    <name type="ordered locus">MSMEG_6057</name>
    <name type="ordered locus">MSMEI_5897</name>
</gene>
<sequence>MRYLVMMFALLVSVTLVSPRPANAVDNQLSVVDGQGRTLTVQQAETFLNGVFPLDRNRLTREWFHSGRATYHVAGPGADEFEGTLELGYQVGFPWSLGVGINFSYTTPNILIDGGDITQPPFGLDTIITPNLFPGVSISADLGNGPGIQEVATFSVDVKGAKGAVAVSNAHGTVTGAAGGVLLRPFARLIASTGDSVTTYGEPWNMN</sequence>
<accession>A0R541</accession>
<accession>I7FM03</accession>
<accession>Q934G1</accession>
<organism>
    <name type="scientific">Mycolicibacterium smegmatis (strain ATCC 700084 / mc(2)155)</name>
    <name type="common">Mycobacterium smegmatis</name>
    <dbReference type="NCBI Taxonomy" id="246196"/>
    <lineage>
        <taxon>Bacteria</taxon>
        <taxon>Bacillati</taxon>
        <taxon>Actinomycetota</taxon>
        <taxon>Actinomycetes</taxon>
        <taxon>Mycobacteriales</taxon>
        <taxon>Mycobacteriaceae</taxon>
        <taxon>Mycolicibacterium</taxon>
    </lineage>
</organism>